<feature type="chain" id="PRO_0000202657" description="Glutathione-specific gamma-glutamylcyclotransferase">
    <location>
        <begin position="1"/>
        <end position="232"/>
    </location>
</feature>
<feature type="active site" description="Proton acceptor" evidence="1">
    <location>
        <position position="115"/>
    </location>
</feature>
<feature type="binding site" evidence="1">
    <location>
        <begin position="10"/>
        <end position="15"/>
    </location>
    <ligand>
        <name>substrate</name>
    </ligand>
</feature>
<feature type="mutagenesis site" description="Loss of catalytic activity against glutathione." evidence="4">
    <original>E</original>
    <variation>Q</variation>
    <location>
        <position position="115"/>
    </location>
</feature>
<feature type="strand" evidence="10">
    <location>
        <begin position="8"/>
        <end position="14"/>
    </location>
</feature>
<feature type="helix" evidence="10">
    <location>
        <begin position="15"/>
        <end position="18"/>
    </location>
</feature>
<feature type="strand" evidence="10">
    <location>
        <begin position="25"/>
        <end position="48"/>
    </location>
</feature>
<feature type="strand" evidence="10">
    <location>
        <begin position="50"/>
        <end position="52"/>
    </location>
</feature>
<feature type="strand" evidence="10">
    <location>
        <begin position="54"/>
        <end position="61"/>
    </location>
</feature>
<feature type="helix" evidence="10">
    <location>
        <begin position="62"/>
        <end position="65"/>
    </location>
</feature>
<feature type="helix" evidence="10">
    <location>
        <begin position="69"/>
        <end position="78"/>
    </location>
</feature>
<feature type="helix" evidence="10">
    <location>
        <begin position="87"/>
        <end position="89"/>
    </location>
</feature>
<feature type="strand" evidence="10">
    <location>
        <begin position="91"/>
        <end position="99"/>
    </location>
</feature>
<feature type="helix" evidence="10">
    <location>
        <begin position="101"/>
        <end position="113"/>
    </location>
</feature>
<feature type="turn" evidence="9">
    <location>
        <begin position="115"/>
        <end position="118"/>
    </location>
</feature>
<feature type="strand" evidence="10">
    <location>
        <begin position="119"/>
        <end position="126"/>
    </location>
</feature>
<feature type="helix" evidence="10">
    <location>
        <begin position="132"/>
        <end position="134"/>
    </location>
</feature>
<feature type="helix" evidence="10">
    <location>
        <begin position="135"/>
        <end position="144"/>
    </location>
</feature>
<feature type="turn" evidence="9">
    <location>
        <begin position="149"/>
        <end position="151"/>
    </location>
</feature>
<feature type="strand" evidence="10">
    <location>
        <begin position="154"/>
        <end position="163"/>
    </location>
</feature>
<feature type="helix" evidence="10">
    <location>
        <begin position="176"/>
        <end position="185"/>
    </location>
</feature>
<feature type="helix" evidence="10">
    <location>
        <begin position="193"/>
        <end position="205"/>
    </location>
</feature>
<feature type="helix" evidence="10">
    <location>
        <begin position="219"/>
        <end position="232"/>
    </location>
</feature>
<sequence>MTNDNSGIWVLGYGSLIYKPPSHYTHRIPAIIHGFARRFWQSSTDHRGTPANPGRVATLIPYEDIIRQTAFLKNVNLYSESAPIQDPDDLVTIGVVYYIPPEHAQEVREYLNVREQNGYTLHEVEVHLETNREHEAELGEALEQLPRHNKSGKRVLLTSVYIGTIDNEAFVGPETVDETAKVIAVSHGPSGSNYEYLAKLEQALAQMPIMKERGRITDHYLTALLETVNKYR</sequence>
<organism>
    <name type="scientific">Saccharomyces cerevisiae (strain ATCC 204508 / S288c)</name>
    <name type="common">Baker's yeast</name>
    <dbReference type="NCBI Taxonomy" id="559292"/>
    <lineage>
        <taxon>Eukaryota</taxon>
        <taxon>Fungi</taxon>
        <taxon>Dikarya</taxon>
        <taxon>Ascomycota</taxon>
        <taxon>Saccharomycotina</taxon>
        <taxon>Saccharomycetes</taxon>
        <taxon>Saccharomycetales</taxon>
        <taxon>Saccharomycetaceae</taxon>
        <taxon>Saccharomyces</taxon>
    </lineage>
</organism>
<reference key="1">
    <citation type="journal article" date="1997" name="Nature">
        <title>The nucleotide sequence of Saccharomyces cerevisiae chromosome V.</title>
        <authorList>
            <person name="Dietrich F.S."/>
            <person name="Mulligan J.T."/>
            <person name="Hennessy K.M."/>
            <person name="Yelton M.A."/>
            <person name="Allen E."/>
            <person name="Araujo R."/>
            <person name="Aviles E."/>
            <person name="Berno A."/>
            <person name="Brennan T."/>
            <person name="Carpenter J."/>
            <person name="Chen E."/>
            <person name="Cherry J.M."/>
            <person name="Chung E."/>
            <person name="Duncan M."/>
            <person name="Guzman E."/>
            <person name="Hartzell G."/>
            <person name="Hunicke-Smith S."/>
            <person name="Hyman R.W."/>
            <person name="Kayser A."/>
            <person name="Komp C."/>
            <person name="Lashkari D."/>
            <person name="Lew H."/>
            <person name="Lin D."/>
            <person name="Mosedale D."/>
            <person name="Nakahara K."/>
            <person name="Namath A."/>
            <person name="Norgren R."/>
            <person name="Oefner P."/>
            <person name="Oh C."/>
            <person name="Petel F.X."/>
            <person name="Roberts D."/>
            <person name="Sehl P."/>
            <person name="Schramm S."/>
            <person name="Shogren T."/>
            <person name="Smith V."/>
            <person name="Taylor P."/>
            <person name="Wei Y."/>
            <person name="Botstein D."/>
            <person name="Davis R.W."/>
        </authorList>
    </citation>
    <scope>NUCLEOTIDE SEQUENCE [LARGE SCALE GENOMIC DNA]</scope>
    <source>
        <strain>ATCC 204508 / S288c</strain>
    </source>
</reference>
<reference key="2">
    <citation type="journal article" date="2014" name="G3 (Bethesda)">
        <title>The reference genome sequence of Saccharomyces cerevisiae: Then and now.</title>
        <authorList>
            <person name="Engel S.R."/>
            <person name="Dietrich F.S."/>
            <person name="Fisk D.G."/>
            <person name="Binkley G."/>
            <person name="Balakrishnan R."/>
            <person name="Costanzo M.C."/>
            <person name="Dwight S.S."/>
            <person name="Hitz B.C."/>
            <person name="Karra K."/>
            <person name="Nash R.S."/>
            <person name="Weng S."/>
            <person name="Wong E.D."/>
            <person name="Lloyd P."/>
            <person name="Skrzypek M.S."/>
            <person name="Miyasato S.R."/>
            <person name="Simison M."/>
            <person name="Cherry J.M."/>
        </authorList>
    </citation>
    <scope>GENOME REANNOTATION</scope>
    <source>
        <strain>ATCC 204508 / S288c</strain>
    </source>
</reference>
<reference key="3">
    <citation type="journal article" date="2007" name="Genome Res.">
        <title>Approaching a complete repository of sequence-verified protein-encoding clones for Saccharomyces cerevisiae.</title>
        <authorList>
            <person name="Hu Y."/>
            <person name="Rolfs A."/>
            <person name="Bhullar B."/>
            <person name="Murthy T.V.S."/>
            <person name="Zhu C."/>
            <person name="Berger M.F."/>
            <person name="Camargo A.A."/>
            <person name="Kelley F."/>
            <person name="McCarron S."/>
            <person name="Jepson D."/>
            <person name="Richardson A."/>
            <person name="Raphael J."/>
            <person name="Moreira D."/>
            <person name="Taycher E."/>
            <person name="Zuo D."/>
            <person name="Mohr S."/>
            <person name="Kane M.F."/>
            <person name="Williamson J."/>
            <person name="Simpson A.J.G."/>
            <person name="Bulyk M.L."/>
            <person name="Harlow E."/>
            <person name="Marsischky G."/>
            <person name="Kolodner R.D."/>
            <person name="LaBaer J."/>
        </authorList>
    </citation>
    <scope>NUCLEOTIDE SEQUENCE [GENOMIC DNA]</scope>
    <source>
        <strain>ATCC 204508 / S288c</strain>
    </source>
</reference>
<reference key="4">
    <citation type="journal article" date="2003" name="Nature">
        <title>Global analysis of protein localization in budding yeast.</title>
        <authorList>
            <person name="Huh W.-K."/>
            <person name="Falvo J.V."/>
            <person name="Gerke L.C."/>
            <person name="Carroll A.S."/>
            <person name="Howson R.W."/>
            <person name="Weissman J.S."/>
            <person name="O'Shea E.K."/>
        </authorList>
    </citation>
    <scope>SUBCELLULAR LOCATION [LARGE SCALE ANALYSIS]</scope>
</reference>
<reference key="5">
    <citation type="journal article" date="2003" name="Nature">
        <title>Global analysis of protein expression in yeast.</title>
        <authorList>
            <person name="Ghaemmaghami S."/>
            <person name="Huh W.-K."/>
            <person name="Bower K."/>
            <person name="Howson R.W."/>
            <person name="Belle A."/>
            <person name="Dephoure N."/>
            <person name="O'Shea E.K."/>
            <person name="Weissman J.S."/>
        </authorList>
    </citation>
    <scope>LEVEL OF PROTEIN EXPRESSION [LARGE SCALE ANALYSIS]</scope>
</reference>
<reference key="6">
    <citation type="journal article" date="2012" name="EMBO Rep.">
        <title>Mammalian proapoptotic factor ChaC1 and its homologues function as gamma-glutamyl cyclotransferases acting specifically on glutathione.</title>
        <authorList>
            <person name="Kumar A."/>
            <person name="Tikoo S."/>
            <person name="Maity S."/>
            <person name="Sengupta S."/>
            <person name="Sengupta S."/>
            <person name="Kaur A."/>
            <person name="Bachhawat A.K."/>
        </authorList>
    </citation>
    <scope>FUNCTION</scope>
    <scope>CATALYTIC ACTIVITY</scope>
    <scope>BIOPHYSICOCHEMICAL PROPERTIES</scope>
    <scope>MUTAGENESIS OF GLU-115</scope>
</reference>
<reference key="7">
    <citation type="journal article" date="2017" name="J. Biol. Chem.">
        <title>ChaC2, an enzyme for slow turnover of cytosolic glutathione.</title>
        <authorList>
            <person name="Kaur A."/>
            <person name="Gautam R."/>
            <person name="Srivastava R."/>
            <person name="Chandel A."/>
            <person name="Kumar A."/>
            <person name="Karthikeyan S."/>
            <person name="Bachhawat A.K."/>
        </authorList>
    </citation>
    <scope>X-RAY CRYSTALLOGRAPHY (1.34 ANGSTROMS) IN COMPLEX WITH BENZOATE</scope>
</reference>
<gene>
    <name evidence="5" type="primary">GCG1</name>
    <name evidence="8" type="ordered locus">YER163C</name>
    <name type="ORF">SYGP-ORF3</name>
</gene>
<name>CHAC_YEAST</name>
<protein>
    <recommendedName>
        <fullName evidence="7">Glutathione-specific gamma-glutamylcyclotransferase</fullName>
        <shortName evidence="5">Gamma-GCG</shortName>
        <ecNumber evidence="4">4.3.2.7</ecNumber>
    </recommendedName>
</protein>
<evidence type="ECO:0000250" key="1">
    <source>
        <dbReference type="UniProtKB" id="O75223"/>
    </source>
</evidence>
<evidence type="ECO:0000269" key="2">
    <source>
    </source>
</evidence>
<evidence type="ECO:0000269" key="3">
    <source>
    </source>
</evidence>
<evidence type="ECO:0000269" key="4">
    <source>
    </source>
</evidence>
<evidence type="ECO:0000303" key="5">
    <source>
    </source>
</evidence>
<evidence type="ECO:0000305" key="6"/>
<evidence type="ECO:0000305" key="7">
    <source>
    </source>
</evidence>
<evidence type="ECO:0000312" key="8">
    <source>
        <dbReference type="SGD" id="S000000965"/>
    </source>
</evidence>
<evidence type="ECO:0007829" key="9">
    <source>
        <dbReference type="PDB" id="5HWI"/>
    </source>
</evidence>
<evidence type="ECO:0007829" key="10">
    <source>
        <dbReference type="PDB" id="5HWK"/>
    </source>
</evidence>
<proteinExistence type="evidence at protein level"/>
<keyword id="KW-0002">3D-structure</keyword>
<keyword id="KW-0963">Cytoplasm</keyword>
<keyword id="KW-0456">Lyase</keyword>
<keyword id="KW-0539">Nucleus</keyword>
<keyword id="KW-1185">Reference proteome</keyword>
<dbReference type="EC" id="4.3.2.7" evidence="4"/>
<dbReference type="EMBL" id="U18917">
    <property type="protein sequence ID" value="AAB64690.1"/>
    <property type="molecule type" value="Genomic_DNA"/>
</dbReference>
<dbReference type="EMBL" id="AY692652">
    <property type="protein sequence ID" value="AAT92671.1"/>
    <property type="molecule type" value="Genomic_DNA"/>
</dbReference>
<dbReference type="EMBL" id="BK006939">
    <property type="protein sequence ID" value="DAA07825.1"/>
    <property type="molecule type" value="Genomic_DNA"/>
</dbReference>
<dbReference type="PIR" id="S30817">
    <property type="entry name" value="S30817"/>
</dbReference>
<dbReference type="RefSeq" id="NP_011090.3">
    <property type="nucleotide sequence ID" value="NM_001179053.3"/>
</dbReference>
<dbReference type="PDB" id="5HWI">
    <property type="method" value="X-ray"/>
    <property type="resolution" value="1.75 A"/>
    <property type="chains" value="A=1-232"/>
</dbReference>
<dbReference type="PDB" id="5HWK">
    <property type="method" value="X-ray"/>
    <property type="resolution" value="1.34 A"/>
    <property type="chains" value="A/B=1-232"/>
</dbReference>
<dbReference type="PDBsum" id="5HWI"/>
<dbReference type="PDBsum" id="5HWK"/>
<dbReference type="SMR" id="P32656"/>
<dbReference type="BioGRID" id="36916">
    <property type="interactions" value="99"/>
</dbReference>
<dbReference type="DIP" id="DIP-4233N"/>
<dbReference type="FunCoup" id="P32656">
    <property type="interactions" value="413"/>
</dbReference>
<dbReference type="IntAct" id="P32656">
    <property type="interactions" value="2"/>
</dbReference>
<dbReference type="STRING" id="4932.YER163C"/>
<dbReference type="iPTMnet" id="P32656"/>
<dbReference type="PaxDb" id="4932-YER163C"/>
<dbReference type="PeptideAtlas" id="P32656"/>
<dbReference type="EnsemblFungi" id="YER163C_mRNA">
    <property type="protein sequence ID" value="YER163C"/>
    <property type="gene ID" value="YER163C"/>
</dbReference>
<dbReference type="GeneID" id="856910"/>
<dbReference type="KEGG" id="sce:YER163C"/>
<dbReference type="AGR" id="SGD:S000000965"/>
<dbReference type="SGD" id="S000000965">
    <property type="gene designation" value="GCG1"/>
</dbReference>
<dbReference type="VEuPathDB" id="FungiDB:YER163C"/>
<dbReference type="eggNOG" id="KOG3182">
    <property type="taxonomic scope" value="Eukaryota"/>
</dbReference>
<dbReference type="GeneTree" id="ENSGT00390000003855"/>
<dbReference type="HOGENOM" id="CLU_070703_0_0_1"/>
<dbReference type="InParanoid" id="P32656"/>
<dbReference type="OMA" id="DHREKDG"/>
<dbReference type="OrthoDB" id="1933483at2759"/>
<dbReference type="BioCyc" id="MetaCyc:G3O-30324-MONOMER"/>
<dbReference type="BioCyc" id="YEAST:G3O-30324-MONOMER"/>
<dbReference type="BRENDA" id="4.3.2.7">
    <property type="organism ID" value="984"/>
</dbReference>
<dbReference type="Reactome" id="R-SCE-174403">
    <property type="pathway name" value="Glutathione synthesis and recycling"/>
</dbReference>
<dbReference type="SABIO-RK" id="P32656"/>
<dbReference type="BioGRID-ORCS" id="856910">
    <property type="hits" value="0 hits in 10 CRISPR screens"/>
</dbReference>
<dbReference type="CD-CODE" id="E03F929F">
    <property type="entry name" value="Stress granule"/>
</dbReference>
<dbReference type="PRO" id="PR:P32656"/>
<dbReference type="Proteomes" id="UP000002311">
    <property type="component" value="Chromosome V"/>
</dbReference>
<dbReference type="RNAct" id="P32656">
    <property type="molecule type" value="protein"/>
</dbReference>
<dbReference type="GO" id="GO:0005737">
    <property type="term" value="C:cytoplasm"/>
    <property type="evidence" value="ECO:0007005"/>
    <property type="project" value="SGD"/>
</dbReference>
<dbReference type="GO" id="GO:0005634">
    <property type="term" value="C:nucleus"/>
    <property type="evidence" value="ECO:0007005"/>
    <property type="project" value="SGD"/>
</dbReference>
<dbReference type="GO" id="GO:0003839">
    <property type="term" value="F:gamma-glutamylcyclotransferase activity"/>
    <property type="evidence" value="ECO:0000314"/>
    <property type="project" value="SGD"/>
</dbReference>
<dbReference type="GO" id="GO:0061928">
    <property type="term" value="F:glutathione specific gamma-glutamylcyclotransferase activity"/>
    <property type="evidence" value="ECO:0000318"/>
    <property type="project" value="GO_Central"/>
</dbReference>
<dbReference type="GO" id="GO:0006751">
    <property type="term" value="P:glutathione catabolic process"/>
    <property type="evidence" value="ECO:0000314"/>
    <property type="project" value="SGD"/>
</dbReference>
<dbReference type="CDD" id="cd06661">
    <property type="entry name" value="GGCT_like"/>
    <property type="match status" value="1"/>
</dbReference>
<dbReference type="FunFam" id="3.10.490.10:FF:000020">
    <property type="entry name" value="Gamma-glutamylcyclotransferase"/>
    <property type="match status" value="1"/>
</dbReference>
<dbReference type="Gene3D" id="3.10.490.10">
    <property type="entry name" value="Gamma-glutamyl cyclotransferase-like"/>
    <property type="match status" value="1"/>
</dbReference>
<dbReference type="InterPro" id="IPR006840">
    <property type="entry name" value="ChaC"/>
</dbReference>
<dbReference type="InterPro" id="IPR013024">
    <property type="entry name" value="GGCT-like"/>
</dbReference>
<dbReference type="PANTHER" id="PTHR12192">
    <property type="entry name" value="CATION TRANSPORT PROTEIN CHAC-RELATED"/>
    <property type="match status" value="1"/>
</dbReference>
<dbReference type="PANTHER" id="PTHR12192:SF2">
    <property type="entry name" value="GLUTATHIONE-SPECIFIC GAMMA-GLUTAMYLCYCLOTRANSFERASE 2"/>
    <property type="match status" value="1"/>
</dbReference>
<dbReference type="Pfam" id="PF04752">
    <property type="entry name" value="ChaC"/>
    <property type="match status" value="1"/>
</dbReference>
<comment type="function">
    <text evidence="4">Catalyzes the cleavage of glutathione into 5-oxo-L-proline and a Cys-Gly dipeptide. Acts specifically on glutathione, but not on other gamma-glutamyl peptides. Allows utilization of gluthathione through subsequent cleavage of the Cys-Gly dipeptide by Cys-Gly metallodipeptidase DUG1.</text>
</comment>
<comment type="catalytic activity">
    <reaction evidence="4">
        <text>glutathione = L-cysteinylglycine + 5-oxo-L-proline</text>
        <dbReference type="Rhea" id="RHEA:47724"/>
        <dbReference type="ChEBI" id="CHEBI:57925"/>
        <dbReference type="ChEBI" id="CHEBI:58402"/>
        <dbReference type="ChEBI" id="CHEBI:61694"/>
        <dbReference type="EC" id="4.3.2.7"/>
    </reaction>
</comment>
<comment type="biophysicochemical properties">
    <kinetics>
        <KM evidence="4">1.52 mM for glutathione</KM>
        <Vmax evidence="4">110.0 umol/h/mg enzyme</Vmax>
        <text evidence="4">kcat is 50.8 min(-1) for glutathione.</text>
    </kinetics>
</comment>
<comment type="subcellular location">
    <subcellularLocation>
        <location evidence="2">Cytoplasm</location>
    </subcellularLocation>
    <subcellularLocation>
        <location evidence="2">Nucleus</location>
    </subcellularLocation>
</comment>
<comment type="miscellaneous">
    <text evidence="3">Present with 1300 molecules/cell in log phase SD medium.</text>
</comment>
<comment type="similarity">
    <text evidence="6">Belongs to the gamma-glutamylcyclotransferase family. ChaC subfamily.</text>
</comment>
<accession>P32656</accession>
<accession>D3DM71</accession>